<dbReference type="EMBL" id="U18466">
    <property type="protein sequence ID" value="AAA65307.1"/>
    <property type="molecule type" value="Genomic_DNA"/>
</dbReference>
<dbReference type="RefSeq" id="NP_042771.1">
    <property type="nucleotide sequence ID" value="NC_001659.2"/>
</dbReference>
<dbReference type="SMR" id="Q65167"/>
<dbReference type="GeneID" id="22220307"/>
<dbReference type="KEGG" id="vg:22220307"/>
<dbReference type="Proteomes" id="UP000000624">
    <property type="component" value="Segment"/>
</dbReference>
<dbReference type="GO" id="GO:0033644">
    <property type="term" value="C:host cell membrane"/>
    <property type="evidence" value="ECO:0007669"/>
    <property type="project" value="UniProtKB-SubCell"/>
</dbReference>
<dbReference type="GO" id="GO:0016020">
    <property type="term" value="C:membrane"/>
    <property type="evidence" value="ECO:0007669"/>
    <property type="project" value="UniProtKB-KW"/>
</dbReference>
<comment type="subcellular location">
    <subcellularLocation>
        <location evidence="4">Host membrane</location>
        <topology evidence="4">Single-pass membrane protein</topology>
    </subcellularLocation>
</comment>
<comment type="induction">
    <text evidence="3">Expressed in the late phase of the viral replicative cycle.</text>
</comment>
<comment type="similarity">
    <text evidence="4">Belongs to the asfivirus B475L family.</text>
</comment>
<feature type="chain" id="PRO_0000373695" description="Uncharacterized protein B475L">
    <location>
        <begin position="1"/>
        <end position="475"/>
    </location>
</feature>
<feature type="transmembrane region" description="Helical" evidence="1">
    <location>
        <begin position="7"/>
        <end position="28"/>
    </location>
</feature>
<feature type="region of interest" description="Disordered" evidence="2">
    <location>
        <begin position="295"/>
        <end position="324"/>
    </location>
</feature>
<feature type="coiled-coil region" evidence="1">
    <location>
        <begin position="183"/>
        <end position="233"/>
    </location>
</feature>
<feature type="compositionally biased region" description="Polar residues" evidence="2">
    <location>
        <begin position="295"/>
        <end position="305"/>
    </location>
</feature>
<feature type="glycosylation site" description="N-linked (GlcNAc...) asparagine; by host" evidence="1">
    <location>
        <position position="73"/>
    </location>
</feature>
<feature type="glycosylation site" description="N-linked (GlcNAc...) asparagine; by host" evidence="1">
    <location>
        <position position="83"/>
    </location>
</feature>
<feature type="glycosylation site" description="N-linked (GlcNAc...) asparagine; by host" evidence="1">
    <location>
        <position position="195"/>
    </location>
</feature>
<feature type="glycosylation site" description="N-linked (GlcNAc...) asparagine; by host" evidence="1">
    <location>
        <position position="450"/>
    </location>
</feature>
<feature type="glycosylation site" description="N-linked (GlcNAc...) asparagine; by host" evidence="1">
    <location>
        <position position="460"/>
    </location>
</feature>
<gene>
    <name type="ordered locus">Ba71V-077</name>
    <name type="ORF">B475L</name>
</gene>
<keyword id="KW-0175">Coiled coil</keyword>
<keyword id="KW-0325">Glycoprotein</keyword>
<keyword id="KW-1043">Host membrane</keyword>
<keyword id="KW-0426">Late protein</keyword>
<keyword id="KW-0472">Membrane</keyword>
<keyword id="KW-1185">Reference proteome</keyword>
<keyword id="KW-0812">Transmembrane</keyword>
<keyword id="KW-1133">Transmembrane helix</keyword>
<protein>
    <recommendedName>
        <fullName>Uncharacterized protein B475L</fullName>
        <shortName>pB475L</shortName>
    </recommendedName>
</protein>
<accession>Q65167</accession>
<name>VF475_ASFB7</name>
<sequence length="475" mass="56068">MDQEESHVISIFETLGAYFINIFYNFLYKNALYKKHSIVTEYQYQVKGYILGVKQNKKLYEKMLDSFYKYFCNITQINSKTLNFSNFITTIVDSFIPKEYSQSISLEKKESILELLLCDYISNLGTFITTEKMLPFIIKNRKENYHKVTKEMQDYSLTFLLKKRMELYNKFLRKQAYVEPETELEETYARLSSYNRSLLHQIEELTSEKKSLLADLSTLRKKYEKRQSEYRRLVQLLYQQIQRSSTSKSSYPLTKFIETLPSEHFSNEEYQKETPADQKEVVEMELLRKQELLTSQELTSKSPNNYPVPHSRTIVSKPPDNYPVPRSRTTTKLDFDNSLQNQELHTKNGFSEKDIVEFGQDKPEEENILAIDQDKPEEENILAIKQDIPEEENILAIDQDKPEFNQDTPEFKEAVLDTKENILEEENQDEPIVQNPFLENFWKPEQKTFNQSGLFEESSNFSNDWSGGDVTLNFS</sequence>
<proteinExistence type="evidence at transcript level"/>
<organismHost>
    <name type="scientific">Ornithodoros</name>
    <name type="common">relapsing fever ticks</name>
    <dbReference type="NCBI Taxonomy" id="6937"/>
</organismHost>
<organismHost>
    <name type="scientific">Sus scrofa</name>
    <name type="common">Pig</name>
    <dbReference type="NCBI Taxonomy" id="9823"/>
</organismHost>
<reference key="1">
    <citation type="journal article" date="1995" name="Virology">
        <title>Analysis of the complete nucleotide sequence of African swine fever virus.</title>
        <authorList>
            <person name="Yanez R.J."/>
            <person name="Rodriguez J.M."/>
            <person name="Nogal M.L."/>
            <person name="Yuste L."/>
            <person name="Enriquez C."/>
            <person name="Rodriguez J.F."/>
            <person name="Vinuela E."/>
        </authorList>
    </citation>
    <scope>NUCLEOTIDE SEQUENCE [LARGE SCALE GENOMIC DNA]</scope>
</reference>
<reference key="2">
    <citation type="journal article" date="2020" name="J. Virol.">
        <title>The African Swine Fever Virus Transcriptome.</title>
        <authorList>
            <person name="Cackett G."/>
            <person name="Matelska D."/>
            <person name="Sykora M."/>
            <person name="Portugal R."/>
            <person name="Malecki M."/>
            <person name="Baehler J."/>
            <person name="Dixon L."/>
            <person name="Werner F."/>
        </authorList>
    </citation>
    <scope>INDUCTION</scope>
</reference>
<organism>
    <name type="scientific">African swine fever virus (strain Badajoz 1971 Vero-adapted)</name>
    <name type="common">Ba71V</name>
    <name type="synonym">ASFV</name>
    <dbReference type="NCBI Taxonomy" id="10498"/>
    <lineage>
        <taxon>Viruses</taxon>
        <taxon>Varidnaviria</taxon>
        <taxon>Bamfordvirae</taxon>
        <taxon>Nucleocytoviricota</taxon>
        <taxon>Pokkesviricetes</taxon>
        <taxon>Asfuvirales</taxon>
        <taxon>Asfarviridae</taxon>
        <taxon>Asfivirus</taxon>
        <taxon>African swine fever virus</taxon>
    </lineage>
</organism>
<evidence type="ECO:0000255" key="1"/>
<evidence type="ECO:0000256" key="2">
    <source>
        <dbReference type="SAM" id="MobiDB-lite"/>
    </source>
</evidence>
<evidence type="ECO:0000269" key="3">
    <source>
    </source>
</evidence>
<evidence type="ECO:0000305" key="4"/>